<protein>
    <recommendedName>
        <fullName evidence="1">Beta-1,4-glucuronyltransferase 1</fullName>
        <ecNumber evidence="4">2.4.1.-</ecNumber>
    </recommendedName>
    <alternativeName>
        <fullName>I-beta-1,3-N-acetylglucosaminyltransferase</fullName>
    </alternativeName>
    <alternativeName>
        <fullName>N-acetyllactosaminide beta-1,3-N-acetylglucosaminyltransferase</fullName>
    </alternativeName>
    <alternativeName>
        <fullName>Poly-N-acetyllactosamine extension enzyme</fullName>
    </alternativeName>
    <alternativeName>
        <fullName>UDP-GlcNAc:betaGal beta-1,3-N-acetylglucosaminyltransferase 1</fullName>
    </alternativeName>
</protein>
<proteinExistence type="evidence at protein level"/>
<evidence type="ECO:0000250" key="1">
    <source>
        <dbReference type="UniProtKB" id="O43505"/>
    </source>
</evidence>
<evidence type="ECO:0000250" key="2">
    <source>
        <dbReference type="UniProtKB" id="Q8BWP8"/>
    </source>
</evidence>
<evidence type="ECO:0000255" key="3"/>
<evidence type="ECO:0000269" key="4">
    <source>
    </source>
</evidence>
<evidence type="ECO:0000305" key="5"/>
<accession>L7YAI7</accession>
<accession>F1Q7L2</accession>
<sequence>MHFSKKCSVFKVVLSALLIVALLQLLYLSFLSKLHGKQQRYKYSELFGSKKNANQGEKNPRREHLRYSLSTGGIFDGSGQYRVYKNLIKSDFSTNQKPGADPRSHHLALATHTTINNLHHLESLLERWKNPISVAIFANGEDVKFATAIIYALSLFCPQVQALVDFHLVCHSGEMATFPDQDREHFVGLQEMGCPAVFAKLESHRDKYKNYAIGSNVSYPNNLLRNVARGGTDAAYILVIDIDMIPSANLHHQFVTMLMKREPAADEVLVLPAFEIRHIRKMPASKPELVQLYQVGEVRPFYDELCSRCQAPTNYSLWVNLASKSSGPLEVSYTINWVDPWEPFYIGARSVPLYDESFRQYGFNRISQACELHIAGYRFSVVSNAFLLHKGFKVQGEFHSRKDEENRKNRILFRSFKESLKAKYPTSPRRC</sequence>
<organism>
    <name type="scientific">Danio rerio</name>
    <name type="common">Zebrafish</name>
    <name type="synonym">Brachydanio rerio</name>
    <dbReference type="NCBI Taxonomy" id="7955"/>
    <lineage>
        <taxon>Eukaryota</taxon>
        <taxon>Metazoa</taxon>
        <taxon>Chordata</taxon>
        <taxon>Craniata</taxon>
        <taxon>Vertebrata</taxon>
        <taxon>Euteleostomi</taxon>
        <taxon>Actinopterygii</taxon>
        <taxon>Neopterygii</taxon>
        <taxon>Teleostei</taxon>
        <taxon>Ostariophysi</taxon>
        <taxon>Cypriniformes</taxon>
        <taxon>Danionidae</taxon>
        <taxon>Danioninae</taxon>
        <taxon>Danio</taxon>
    </lineage>
</organism>
<reference key="1">
    <citation type="journal article" date="2013" name="Hum. Mol. Genet.">
        <title>Missense mutations in beta-1,3-N-acetylglucosaminyltransferase 1 (B3GNT1) cause Walker-Warburg syndrome.</title>
        <authorList>
            <person name="Buysse K."/>
            <person name="Riemersma M."/>
            <person name="Powell G."/>
            <person name="van Reeuwijk J."/>
            <person name="Chitayat D."/>
            <person name="Roscioli T."/>
            <person name="Kamsteeg E.J."/>
            <person name="van den Elzen C."/>
            <person name="van Beusekom E."/>
            <person name="Blaser S."/>
            <person name="Babul-Hirji R."/>
            <person name="Halliday W."/>
            <person name="Wright G.J."/>
            <person name="Stemple D.L."/>
            <person name="Lin Y.Y."/>
            <person name="Lefeber D.J."/>
            <person name="van Bokhoven H."/>
        </authorList>
    </citation>
    <scope>NUCLEOTIDE SEQUENCE [MRNA]</scope>
    <scope>FUNCTION</scope>
    <scope>DISRUPTION PHENOTYPE</scope>
    <scope>CATALYTIC ACTIVITY</scope>
</reference>
<reference key="2">
    <citation type="journal article" date="2013" name="Nature">
        <title>The zebrafish reference genome sequence and its relationship to the human genome.</title>
        <authorList>
            <person name="Howe K."/>
            <person name="Clark M.D."/>
            <person name="Torroja C.F."/>
            <person name="Torrance J."/>
            <person name="Berthelot C."/>
            <person name="Muffato M."/>
            <person name="Collins J.E."/>
            <person name="Humphray S."/>
            <person name="McLaren K."/>
            <person name="Matthews L."/>
            <person name="McLaren S."/>
            <person name="Sealy I."/>
            <person name="Caccamo M."/>
            <person name="Churcher C."/>
            <person name="Scott C."/>
            <person name="Barrett J.C."/>
            <person name="Koch R."/>
            <person name="Rauch G.J."/>
            <person name="White S."/>
            <person name="Chow W."/>
            <person name="Kilian B."/>
            <person name="Quintais L.T."/>
            <person name="Guerra-Assuncao J.A."/>
            <person name="Zhou Y."/>
            <person name="Gu Y."/>
            <person name="Yen J."/>
            <person name="Vogel J.H."/>
            <person name="Eyre T."/>
            <person name="Redmond S."/>
            <person name="Banerjee R."/>
            <person name="Chi J."/>
            <person name="Fu B."/>
            <person name="Langley E."/>
            <person name="Maguire S.F."/>
            <person name="Laird G.K."/>
            <person name="Lloyd D."/>
            <person name="Kenyon E."/>
            <person name="Donaldson S."/>
            <person name="Sehra H."/>
            <person name="Almeida-King J."/>
            <person name="Loveland J."/>
            <person name="Trevanion S."/>
            <person name="Jones M."/>
            <person name="Quail M."/>
            <person name="Willey D."/>
            <person name="Hunt A."/>
            <person name="Burton J."/>
            <person name="Sims S."/>
            <person name="McLay K."/>
            <person name="Plumb B."/>
            <person name="Davis J."/>
            <person name="Clee C."/>
            <person name="Oliver K."/>
            <person name="Clark R."/>
            <person name="Riddle C."/>
            <person name="Elliot D."/>
            <person name="Threadgold G."/>
            <person name="Harden G."/>
            <person name="Ware D."/>
            <person name="Begum S."/>
            <person name="Mortimore B."/>
            <person name="Kerry G."/>
            <person name="Heath P."/>
            <person name="Phillimore B."/>
            <person name="Tracey A."/>
            <person name="Corby N."/>
            <person name="Dunn M."/>
            <person name="Johnson C."/>
            <person name="Wood J."/>
            <person name="Clark S."/>
            <person name="Pelan S."/>
            <person name="Griffiths G."/>
            <person name="Smith M."/>
            <person name="Glithero R."/>
            <person name="Howden P."/>
            <person name="Barker N."/>
            <person name="Lloyd C."/>
            <person name="Stevens C."/>
            <person name="Harley J."/>
            <person name="Holt K."/>
            <person name="Panagiotidis G."/>
            <person name="Lovell J."/>
            <person name="Beasley H."/>
            <person name="Henderson C."/>
            <person name="Gordon D."/>
            <person name="Auger K."/>
            <person name="Wright D."/>
            <person name="Collins J."/>
            <person name="Raisen C."/>
            <person name="Dyer L."/>
            <person name="Leung K."/>
            <person name="Robertson L."/>
            <person name="Ambridge K."/>
            <person name="Leongamornlert D."/>
            <person name="McGuire S."/>
            <person name="Gilderthorp R."/>
            <person name="Griffiths C."/>
            <person name="Manthravadi D."/>
            <person name="Nichol S."/>
            <person name="Barker G."/>
            <person name="Whitehead S."/>
            <person name="Kay M."/>
            <person name="Brown J."/>
            <person name="Murnane C."/>
            <person name="Gray E."/>
            <person name="Humphries M."/>
            <person name="Sycamore N."/>
            <person name="Barker D."/>
            <person name="Saunders D."/>
            <person name="Wallis J."/>
            <person name="Babbage A."/>
            <person name="Hammond S."/>
            <person name="Mashreghi-Mohammadi M."/>
            <person name="Barr L."/>
            <person name="Martin S."/>
            <person name="Wray P."/>
            <person name="Ellington A."/>
            <person name="Matthews N."/>
            <person name="Ellwood M."/>
            <person name="Woodmansey R."/>
            <person name="Clark G."/>
            <person name="Cooper J."/>
            <person name="Tromans A."/>
            <person name="Grafham D."/>
            <person name="Skuce C."/>
            <person name="Pandian R."/>
            <person name="Andrews R."/>
            <person name="Harrison E."/>
            <person name="Kimberley A."/>
            <person name="Garnett J."/>
            <person name="Fosker N."/>
            <person name="Hall R."/>
            <person name="Garner P."/>
            <person name="Kelly D."/>
            <person name="Bird C."/>
            <person name="Palmer S."/>
            <person name="Gehring I."/>
            <person name="Berger A."/>
            <person name="Dooley C.M."/>
            <person name="Ersan-Urun Z."/>
            <person name="Eser C."/>
            <person name="Geiger H."/>
            <person name="Geisler M."/>
            <person name="Karotki L."/>
            <person name="Kirn A."/>
            <person name="Konantz J."/>
            <person name="Konantz M."/>
            <person name="Oberlander M."/>
            <person name="Rudolph-Geiger S."/>
            <person name="Teucke M."/>
            <person name="Lanz C."/>
            <person name="Raddatz G."/>
            <person name="Osoegawa K."/>
            <person name="Zhu B."/>
            <person name="Rapp A."/>
            <person name="Widaa S."/>
            <person name="Langford C."/>
            <person name="Yang F."/>
            <person name="Schuster S.C."/>
            <person name="Carter N.P."/>
            <person name="Harrow J."/>
            <person name="Ning Z."/>
            <person name="Herrero J."/>
            <person name="Searle S.M."/>
            <person name="Enright A."/>
            <person name="Geisler R."/>
            <person name="Plasterk R.H."/>
            <person name="Lee C."/>
            <person name="Westerfield M."/>
            <person name="de Jong P.J."/>
            <person name="Zon L.I."/>
            <person name="Postlethwait J.H."/>
            <person name="Nusslein-Volhard C."/>
            <person name="Hubbard T.J."/>
            <person name="Roest Crollius H."/>
            <person name="Rogers J."/>
            <person name="Stemple D.L."/>
        </authorList>
    </citation>
    <scope>NUCLEOTIDE SEQUENCE [LARGE SCALE GENOMIC DNA]</scope>
    <source>
        <strain>Tuebingen</strain>
    </source>
</reference>
<name>B4GA1_DANRE</name>
<keyword id="KW-0325">Glycoprotein</keyword>
<keyword id="KW-0328">Glycosyltransferase</keyword>
<keyword id="KW-0333">Golgi apparatus</keyword>
<keyword id="KW-0464">Manganese</keyword>
<keyword id="KW-0472">Membrane</keyword>
<keyword id="KW-0479">Metal-binding</keyword>
<keyword id="KW-1185">Reference proteome</keyword>
<keyword id="KW-0735">Signal-anchor</keyword>
<keyword id="KW-0808">Transferase</keyword>
<keyword id="KW-0812">Transmembrane</keyword>
<keyword id="KW-1133">Transmembrane helix</keyword>
<comment type="function">
    <text evidence="1 2 4">Beta-1,4-glucuronyltransferase involved in O-mannosylation of alpha-dystroglycan (DAG1) (PubMed:23359570). Transfers a glucuronic acid (GlcA) residue onto a xylose (Xyl) acceptor to produce the glucuronyl-beta-1,4-xylose-beta disaccharide primer, which is further elongated by LARGE, during synthesis of phosphorylated O-mannosyl glycan (By similarity). Phosphorylated O-mannosyl glycan is a carbohydrate structure present in alpha-dystroglycan (DAG1), which is required for binding laminin G-like domain-containing extracellular proteins with high affinity (By similarity). Required for axon guidance; via its function in O-mannosylation of alpha-dystroglycan (DAG1) (By similarity).</text>
</comment>
<comment type="catalytic activity">
    <reaction evidence="4">
        <text>3-O-[beta-D-Xyl-(1-&gt;4)-Rib-ol-P-Rib-ol-P-3-beta-D-GalNAc-(1-&gt;3)-beta-D-GlcNAc-(1-&gt;4)-(O-6-P-alpha-D-Man)]-Thr-[protein] + UDP-alpha-D-glucuronate = 3-O-[beta-D-GlcA-(1-&gt;3)-beta-D-Xyl-(1-&gt;4)-Rib-ol-P-Rib-ol-P-3-beta-D-GalNAc-(1-&gt;3)-beta-D-GlcNAc-(1-&gt;4)-(O-6-P-alpha-D-Man)]-Thr-[protein] + UDP + H(+)</text>
        <dbReference type="Rhea" id="RHEA:46860"/>
        <dbReference type="Rhea" id="RHEA-COMP:15023"/>
        <dbReference type="Rhea" id="RHEA-COMP:17482"/>
        <dbReference type="ChEBI" id="CHEBI:15378"/>
        <dbReference type="ChEBI" id="CHEBI:58052"/>
        <dbReference type="ChEBI" id="CHEBI:58223"/>
        <dbReference type="ChEBI" id="CHEBI:142405"/>
        <dbReference type="ChEBI" id="CHEBI:177336"/>
    </reaction>
</comment>
<comment type="cofactor">
    <cofactor evidence="1">
        <name>Mn(2+)</name>
        <dbReference type="ChEBI" id="CHEBI:29035"/>
    </cofactor>
</comment>
<comment type="pathway">
    <text evidence="1 2">Protein modification; protein glycosylation.</text>
</comment>
<comment type="subcellular location">
    <subcellularLocation>
        <location evidence="1 2">Golgi apparatus membrane</location>
        <topology>Single-pass type II membrane protein</topology>
    </subcellularLocation>
    <text evidence="1">Localizes near the trans-Golgi apparatus.</text>
</comment>
<comment type="disruption phenotype">
    <text evidence="4">Muscular defects and reduced alpha-dystroglycan (dag1) glycosylation.</text>
</comment>
<comment type="similarity">
    <text evidence="5">Belongs to the glycosyltransferase 49 family.</text>
</comment>
<feature type="chain" id="PRO_0000424020" description="Beta-1,4-glucuronyltransferase 1">
    <location>
        <begin position="1"/>
        <end position="431"/>
    </location>
</feature>
<feature type="topological domain" description="Cytoplasmic" evidence="3">
    <location>
        <begin position="1"/>
        <end position="11"/>
    </location>
</feature>
<feature type="transmembrane region" description="Helical" evidence="3">
    <location>
        <begin position="12"/>
        <end position="32"/>
    </location>
</feature>
<feature type="topological domain" description="Lumenal" evidence="3">
    <location>
        <begin position="33"/>
        <end position="431"/>
    </location>
</feature>
<feature type="binding site" evidence="1">
    <location>
        <position position="241"/>
    </location>
    <ligand>
        <name>Mn(2+)</name>
        <dbReference type="ChEBI" id="CHEBI:29035"/>
    </ligand>
</feature>
<feature type="binding site" evidence="1">
    <location>
        <position position="243"/>
    </location>
    <ligand>
        <name>Mn(2+)</name>
        <dbReference type="ChEBI" id="CHEBI:29035"/>
    </ligand>
</feature>
<feature type="glycosylation site" description="N-linked (GlcNAc...) asparagine" evidence="3">
    <location>
        <position position="216"/>
    </location>
</feature>
<feature type="glycosylation site" description="N-linked (GlcNAc...) asparagine" evidence="3">
    <location>
        <position position="314"/>
    </location>
</feature>
<dbReference type="EC" id="2.4.1.-" evidence="4"/>
<dbReference type="EMBL" id="KC136354">
    <property type="protein sequence ID" value="AGD94656.1"/>
    <property type="molecule type" value="mRNA"/>
</dbReference>
<dbReference type="EMBL" id="BX324230">
    <property type="status" value="NOT_ANNOTATED_CDS"/>
    <property type="molecule type" value="Genomic_DNA"/>
</dbReference>
<dbReference type="RefSeq" id="NP_001265757.1">
    <property type="nucleotide sequence ID" value="NM_001278828.1"/>
</dbReference>
<dbReference type="SMR" id="L7YAI7"/>
<dbReference type="FunCoup" id="L7YAI7">
    <property type="interactions" value="1117"/>
</dbReference>
<dbReference type="STRING" id="7955.ENSDARP00000103038"/>
<dbReference type="CAZy" id="GT49">
    <property type="family name" value="Glycosyltransferase Family 49"/>
</dbReference>
<dbReference type="GlyCosmos" id="L7YAI7">
    <property type="glycosylation" value="2 sites, No reported glycans"/>
</dbReference>
<dbReference type="PaxDb" id="7955-ENSDARP00000103038"/>
<dbReference type="Ensembl" id="ENSDART00000111708">
    <property type="protein sequence ID" value="ENSDARP00000103038"/>
    <property type="gene ID" value="ENSDARG00000077583"/>
</dbReference>
<dbReference type="Ensembl" id="ENSDART00000182592">
    <property type="protein sequence ID" value="ENSDARP00000157274"/>
    <property type="gene ID" value="ENSDARG00000111962"/>
</dbReference>
<dbReference type="GeneID" id="101669768"/>
<dbReference type="KEGG" id="dre:101669768"/>
<dbReference type="AGR" id="ZFIN:ZDB-GENE-121001-5"/>
<dbReference type="CTD" id="11041"/>
<dbReference type="ZFIN" id="ZDB-GENE-121001-5">
    <property type="gene designation" value="b4gat1"/>
</dbReference>
<dbReference type="eggNOG" id="KOG3765">
    <property type="taxonomic scope" value="Eukaryota"/>
</dbReference>
<dbReference type="HOGENOM" id="CLU_019238_5_0_1"/>
<dbReference type="InParanoid" id="L7YAI7"/>
<dbReference type="OMA" id="SGQYRIY"/>
<dbReference type="OrthoDB" id="9974378at2759"/>
<dbReference type="TreeFam" id="TF319168"/>
<dbReference type="Reactome" id="R-DRE-2022854">
    <property type="pathway name" value="Keratan sulfate biosynthesis"/>
</dbReference>
<dbReference type="Reactome" id="R-DRE-5173105">
    <property type="pathway name" value="O-linked glycosylation"/>
</dbReference>
<dbReference type="UniPathway" id="UPA00378"/>
<dbReference type="PRO" id="PR:L7YAI7"/>
<dbReference type="Proteomes" id="UP000000437">
    <property type="component" value="Alternate scaffold 7"/>
</dbReference>
<dbReference type="Proteomes" id="UP000000437">
    <property type="component" value="Chromosome 7"/>
</dbReference>
<dbReference type="Bgee" id="ENSDARG00000077583">
    <property type="expression patterns" value="Expressed in presomitic mesoderm and 18 other cell types or tissues"/>
</dbReference>
<dbReference type="GO" id="GO:0005794">
    <property type="term" value="C:Golgi apparatus"/>
    <property type="evidence" value="ECO:0000250"/>
    <property type="project" value="UniProtKB"/>
</dbReference>
<dbReference type="GO" id="GO:0000139">
    <property type="term" value="C:Golgi membrane"/>
    <property type="evidence" value="ECO:0007669"/>
    <property type="project" value="UniProtKB-SubCell"/>
</dbReference>
<dbReference type="GO" id="GO:0015020">
    <property type="term" value="F:glucuronosyltransferase activity"/>
    <property type="evidence" value="ECO:0000250"/>
    <property type="project" value="UniProtKB"/>
</dbReference>
<dbReference type="GO" id="GO:0046872">
    <property type="term" value="F:metal ion binding"/>
    <property type="evidence" value="ECO:0007669"/>
    <property type="project" value="UniProtKB-KW"/>
</dbReference>
<dbReference type="GO" id="GO:0055001">
    <property type="term" value="P:muscle cell development"/>
    <property type="evidence" value="ECO:0000315"/>
    <property type="project" value="ZFIN"/>
</dbReference>
<dbReference type="GO" id="GO:0006486">
    <property type="term" value="P:protein glycosylation"/>
    <property type="evidence" value="ECO:0000315"/>
    <property type="project" value="ZFIN"/>
</dbReference>
<dbReference type="GO" id="GO:0035269">
    <property type="term" value="P:protein O-linked mannosylation"/>
    <property type="evidence" value="ECO:0000250"/>
    <property type="project" value="UniProtKB"/>
</dbReference>
<dbReference type="InterPro" id="IPR043189">
    <property type="entry name" value="B4GAT1"/>
</dbReference>
<dbReference type="PANTHER" id="PTHR46420">
    <property type="entry name" value="BETA-1,4-GLUCURONYLTRANSFERASE 1"/>
    <property type="match status" value="1"/>
</dbReference>
<dbReference type="PANTHER" id="PTHR46420:SF1">
    <property type="entry name" value="BETA-1,4-GLUCURONYLTRANSFERASE 1"/>
    <property type="match status" value="1"/>
</dbReference>
<dbReference type="Pfam" id="PF13896">
    <property type="entry name" value="Glyco_transf_49"/>
    <property type="match status" value="1"/>
</dbReference>
<gene>
    <name evidence="1" type="primary">b4gat1</name>
    <name type="synonym">b3gnt1</name>
</gene>